<gene>
    <name type="primary">ase</name>
    <name type="synonym">T8</name>
    <name type="ORF">CG3258</name>
</gene>
<organism>
    <name type="scientific">Drosophila melanogaster</name>
    <name type="common">Fruit fly</name>
    <dbReference type="NCBI Taxonomy" id="7227"/>
    <lineage>
        <taxon>Eukaryota</taxon>
        <taxon>Metazoa</taxon>
        <taxon>Ecdysozoa</taxon>
        <taxon>Arthropoda</taxon>
        <taxon>Hexapoda</taxon>
        <taxon>Insecta</taxon>
        <taxon>Pterygota</taxon>
        <taxon>Neoptera</taxon>
        <taxon>Endopterygota</taxon>
        <taxon>Diptera</taxon>
        <taxon>Brachycera</taxon>
        <taxon>Muscomorpha</taxon>
        <taxon>Ephydroidea</taxon>
        <taxon>Drosophilidae</taxon>
        <taxon>Drosophila</taxon>
        <taxon>Sophophora</taxon>
    </lineage>
</organism>
<evidence type="ECO:0000255" key="1">
    <source>
        <dbReference type="PROSITE-ProRule" id="PRU00981"/>
    </source>
</evidence>
<evidence type="ECO:0000256" key="2">
    <source>
        <dbReference type="SAM" id="MobiDB-lite"/>
    </source>
</evidence>
<evidence type="ECO:0000305" key="3"/>
<dbReference type="EMBL" id="X52892">
    <property type="protein sequence ID" value="CAA37074.1"/>
    <property type="molecule type" value="Genomic_DNA"/>
</dbReference>
<dbReference type="EMBL" id="AE014298">
    <property type="protein sequence ID" value="AAF45502.1"/>
    <property type="molecule type" value="Genomic_DNA"/>
</dbReference>
<dbReference type="EMBL" id="AL009188">
    <property type="protein sequence ID" value="CAA15673.1"/>
    <property type="molecule type" value="Genomic_DNA"/>
</dbReference>
<dbReference type="EMBL" id="AY095069">
    <property type="protein sequence ID" value="AAM11397.1"/>
    <property type="molecule type" value="mRNA"/>
</dbReference>
<dbReference type="EMBL" id="X12550">
    <property type="protein sequence ID" value="CAA31066.1"/>
    <property type="status" value="ALT_FRAME"/>
    <property type="molecule type" value="Genomic_DNA"/>
</dbReference>
<dbReference type="PIR" id="S06949">
    <property type="entry name" value="S06949"/>
</dbReference>
<dbReference type="RefSeq" id="NP_476694.1">
    <property type="nucleotide sequence ID" value="NM_057346.5"/>
</dbReference>
<dbReference type="SMR" id="P09775"/>
<dbReference type="BioGRID" id="57558">
    <property type="interactions" value="16"/>
</dbReference>
<dbReference type="DIP" id="DIP-636N"/>
<dbReference type="FunCoup" id="P09775">
    <property type="interactions" value="12"/>
</dbReference>
<dbReference type="IntAct" id="P09775">
    <property type="interactions" value="11"/>
</dbReference>
<dbReference type="STRING" id="7227.FBpp0070074"/>
<dbReference type="PaxDb" id="7227-FBpp0070074"/>
<dbReference type="DNASU" id="30985"/>
<dbReference type="EnsemblMetazoa" id="FBtr0070075">
    <property type="protein sequence ID" value="FBpp0070074"/>
    <property type="gene ID" value="FBgn0000137"/>
</dbReference>
<dbReference type="GeneID" id="30985"/>
<dbReference type="KEGG" id="dme:Dmel_CG3258"/>
<dbReference type="AGR" id="FB:FBgn0000137"/>
<dbReference type="CTD" id="30985"/>
<dbReference type="FlyBase" id="FBgn0000137">
    <property type="gene designation" value="ase"/>
</dbReference>
<dbReference type="VEuPathDB" id="VectorBase:FBgn0000137"/>
<dbReference type="eggNOG" id="KOG4029">
    <property type="taxonomic scope" value="Eukaryota"/>
</dbReference>
<dbReference type="GeneTree" id="ENSGT00940000172534"/>
<dbReference type="HOGENOM" id="CLU_034324_0_0_1"/>
<dbReference type="InParanoid" id="P09775"/>
<dbReference type="OMA" id="MQYIRIP"/>
<dbReference type="OrthoDB" id="5976910at2759"/>
<dbReference type="PhylomeDB" id="P09775"/>
<dbReference type="SignaLink" id="P09775"/>
<dbReference type="BioGRID-ORCS" id="30985">
    <property type="hits" value="0 hits in 3 CRISPR screens"/>
</dbReference>
<dbReference type="ChiTaRS" id="tsr">
    <property type="organism name" value="fly"/>
</dbReference>
<dbReference type="GenomeRNAi" id="30985"/>
<dbReference type="PRO" id="PR:P09775"/>
<dbReference type="Proteomes" id="UP000000803">
    <property type="component" value="Chromosome X"/>
</dbReference>
<dbReference type="Bgee" id="FBgn0000137">
    <property type="expression patterns" value="Expressed in posterior embryonic/larval midgut (Drosophila) and 42 other cell types or tissues"/>
</dbReference>
<dbReference type="GO" id="GO:0005634">
    <property type="term" value="C:nucleus"/>
    <property type="evidence" value="ECO:0000314"/>
    <property type="project" value="FlyBase"/>
</dbReference>
<dbReference type="GO" id="GO:0090575">
    <property type="term" value="C:RNA polymerase II transcription regulator complex"/>
    <property type="evidence" value="ECO:0000318"/>
    <property type="project" value="GO_Central"/>
</dbReference>
<dbReference type="GO" id="GO:0003677">
    <property type="term" value="F:DNA binding"/>
    <property type="evidence" value="ECO:0000314"/>
    <property type="project" value="FlyBase"/>
</dbReference>
<dbReference type="GO" id="GO:0000981">
    <property type="term" value="F:DNA-binding transcription factor activity, RNA polymerase II-specific"/>
    <property type="evidence" value="ECO:0000318"/>
    <property type="project" value="GO_Central"/>
</dbReference>
<dbReference type="GO" id="GO:0046982">
    <property type="term" value="F:protein heterodimerization activity"/>
    <property type="evidence" value="ECO:0000353"/>
    <property type="project" value="FlyBase"/>
</dbReference>
<dbReference type="GO" id="GO:0042803">
    <property type="term" value="F:protein homodimerization activity"/>
    <property type="evidence" value="ECO:0000353"/>
    <property type="project" value="FlyBase"/>
</dbReference>
<dbReference type="GO" id="GO:0007417">
    <property type="term" value="P:central nervous system development"/>
    <property type="evidence" value="ECO:0000303"/>
    <property type="project" value="FlyBase"/>
</dbReference>
<dbReference type="GO" id="GO:0022416">
    <property type="term" value="P:chaeta development"/>
    <property type="evidence" value="ECO:0000315"/>
    <property type="project" value="FlyBase"/>
</dbReference>
<dbReference type="GO" id="GO:0008407">
    <property type="term" value="P:chaeta morphogenesis"/>
    <property type="evidence" value="ECO:0000315"/>
    <property type="project" value="FlyBase"/>
</dbReference>
<dbReference type="GO" id="GO:0061331">
    <property type="term" value="P:epithelial cell proliferation involved in Malpighian tubule morphogenesis"/>
    <property type="evidence" value="ECO:0000315"/>
    <property type="project" value="FlyBase"/>
</dbReference>
<dbReference type="GO" id="GO:0061382">
    <property type="term" value="P:Malpighian tubule tip cell differentiation"/>
    <property type="evidence" value="ECO:0000315"/>
    <property type="project" value="FlyBase"/>
</dbReference>
<dbReference type="GO" id="GO:0045839">
    <property type="term" value="P:negative regulation of mitotic nuclear division"/>
    <property type="evidence" value="ECO:0000315"/>
    <property type="project" value="FlyBase"/>
</dbReference>
<dbReference type="GO" id="GO:0007399">
    <property type="term" value="P:nervous system development"/>
    <property type="evidence" value="ECO:0000316"/>
    <property type="project" value="FlyBase"/>
</dbReference>
<dbReference type="GO" id="GO:0007400">
    <property type="term" value="P:neuroblast fate determination"/>
    <property type="evidence" value="ECO:0000315"/>
    <property type="project" value="FlyBase"/>
</dbReference>
<dbReference type="GO" id="GO:0007422">
    <property type="term" value="P:peripheral nervous system development"/>
    <property type="evidence" value="ECO:0000303"/>
    <property type="project" value="FlyBase"/>
</dbReference>
<dbReference type="GO" id="GO:0045944">
    <property type="term" value="P:positive regulation of transcription by RNA polymerase II"/>
    <property type="evidence" value="ECO:0000315"/>
    <property type="project" value="FlyBase"/>
</dbReference>
<dbReference type="GO" id="GO:2000177">
    <property type="term" value="P:regulation of neural precursor cell proliferation"/>
    <property type="evidence" value="ECO:0000315"/>
    <property type="project" value="FlyBase"/>
</dbReference>
<dbReference type="GO" id="GO:0050767">
    <property type="term" value="P:regulation of neurogenesis"/>
    <property type="evidence" value="ECO:0000315"/>
    <property type="project" value="FlyBase"/>
</dbReference>
<dbReference type="CDD" id="cd19744">
    <property type="entry name" value="bHLH_TS_dAS-C_like"/>
    <property type="match status" value="1"/>
</dbReference>
<dbReference type="Gene3D" id="4.10.280.10">
    <property type="entry name" value="Helix-loop-helix DNA-binding domain"/>
    <property type="match status" value="1"/>
</dbReference>
<dbReference type="InterPro" id="IPR011598">
    <property type="entry name" value="bHLH_dom"/>
</dbReference>
<dbReference type="InterPro" id="IPR036638">
    <property type="entry name" value="HLH_DNA-bd_sf"/>
</dbReference>
<dbReference type="InterPro" id="IPR015660">
    <property type="entry name" value="MASH1/Ascl1a-like"/>
</dbReference>
<dbReference type="PANTHER" id="PTHR13935:SF106">
    <property type="entry name" value="ACHAETE-SCUTE COMPLEX PROTEIN T5-RELATED"/>
    <property type="match status" value="1"/>
</dbReference>
<dbReference type="PANTHER" id="PTHR13935">
    <property type="entry name" value="ACHAETE-SCUTE TRANSCRIPTION FACTOR-RELATED"/>
    <property type="match status" value="1"/>
</dbReference>
<dbReference type="Pfam" id="PF00010">
    <property type="entry name" value="HLH"/>
    <property type="match status" value="1"/>
</dbReference>
<dbReference type="SMART" id="SM00353">
    <property type="entry name" value="HLH"/>
    <property type="match status" value="1"/>
</dbReference>
<dbReference type="SUPFAM" id="SSF47459">
    <property type="entry name" value="HLH, helix-loop-helix DNA-binding domain"/>
    <property type="match status" value="1"/>
</dbReference>
<dbReference type="PROSITE" id="PS50888">
    <property type="entry name" value="BHLH"/>
    <property type="match status" value="1"/>
</dbReference>
<keyword id="KW-0217">Developmental protein</keyword>
<keyword id="KW-0221">Differentiation</keyword>
<keyword id="KW-0238">DNA-binding</keyword>
<keyword id="KW-0524">Neurogenesis</keyword>
<keyword id="KW-1185">Reference proteome</keyword>
<feature type="chain" id="PRO_0000127138" description="Achaete-scute complex protein T8">
    <location>
        <begin position="1"/>
        <end position="486"/>
    </location>
</feature>
<feature type="domain" description="bHLH" evidence="1">
    <location>
        <begin position="159"/>
        <end position="223"/>
    </location>
</feature>
<feature type="region of interest" description="Disordered" evidence="2">
    <location>
        <begin position="1"/>
        <end position="26"/>
    </location>
</feature>
<feature type="region of interest" description="Disordered" evidence="2">
    <location>
        <begin position="75"/>
        <end position="158"/>
    </location>
</feature>
<feature type="compositionally biased region" description="Polar residues" evidence="2">
    <location>
        <begin position="75"/>
        <end position="86"/>
    </location>
</feature>
<name>AST8_DROME</name>
<accession>P09775</accession>
<accession>Q541C1</accession>
<accession>Q9W5G2</accession>
<proteinExistence type="evidence at transcript level"/>
<comment type="function">
    <text>Involved in the determination of the neuronal precursors of optic lobes in the central nervous system.</text>
</comment>
<comment type="subunit">
    <text>Efficient DNA binding requires dimerization with another bHLH protein.</text>
</comment>
<comment type="tissue specificity">
    <text>L(1)SC, SC and AC strongly label the presumptive stomatogastric nervous system, while ASE is more prominent in the presumptive procephalic lobe.</text>
</comment>
<comment type="sequence caution" evidence="3">
    <conflict type="frameshift">
        <sequence resource="EMBL-CDS" id="CAA31066"/>
    </conflict>
</comment>
<protein>
    <recommendedName>
        <fullName>Achaete-scute complex protein T8</fullName>
    </recommendedName>
    <alternativeName>
        <fullName>Protein asense</fullName>
    </alternativeName>
</protein>
<reference key="1">
    <citation type="journal article" date="1989" name="EMBO J.">
        <title>Molecular analysis of the asense gene, a member of the achaete-scute complex of Drosophila melanogaster, and its novel role in optic lobe development.</title>
        <authorList>
            <person name="Gonzalez F."/>
            <person name="Romani S."/>
            <person name="Cubas P."/>
            <person name="Modolell J."/>
            <person name="Campuzano S."/>
        </authorList>
    </citation>
    <scope>NUCLEOTIDE SEQUENCE [GENOMIC DNA]</scope>
    <source>
        <strain>Canton-S</strain>
    </source>
</reference>
<reference key="2">
    <citation type="journal article" date="2000" name="Science">
        <title>The genome sequence of Drosophila melanogaster.</title>
        <authorList>
            <person name="Adams M.D."/>
            <person name="Celniker S.E."/>
            <person name="Holt R.A."/>
            <person name="Evans C.A."/>
            <person name="Gocayne J.D."/>
            <person name="Amanatides P.G."/>
            <person name="Scherer S.E."/>
            <person name="Li P.W."/>
            <person name="Hoskins R.A."/>
            <person name="Galle R.F."/>
            <person name="George R.A."/>
            <person name="Lewis S.E."/>
            <person name="Richards S."/>
            <person name="Ashburner M."/>
            <person name="Henderson S.N."/>
            <person name="Sutton G.G."/>
            <person name="Wortman J.R."/>
            <person name="Yandell M.D."/>
            <person name="Zhang Q."/>
            <person name="Chen L.X."/>
            <person name="Brandon R.C."/>
            <person name="Rogers Y.-H.C."/>
            <person name="Blazej R.G."/>
            <person name="Champe M."/>
            <person name="Pfeiffer B.D."/>
            <person name="Wan K.H."/>
            <person name="Doyle C."/>
            <person name="Baxter E.G."/>
            <person name="Helt G."/>
            <person name="Nelson C.R."/>
            <person name="Miklos G.L.G."/>
            <person name="Abril J.F."/>
            <person name="Agbayani A."/>
            <person name="An H.-J."/>
            <person name="Andrews-Pfannkoch C."/>
            <person name="Baldwin D."/>
            <person name="Ballew R.M."/>
            <person name="Basu A."/>
            <person name="Baxendale J."/>
            <person name="Bayraktaroglu L."/>
            <person name="Beasley E.M."/>
            <person name="Beeson K.Y."/>
            <person name="Benos P.V."/>
            <person name="Berman B.P."/>
            <person name="Bhandari D."/>
            <person name="Bolshakov S."/>
            <person name="Borkova D."/>
            <person name="Botchan M.R."/>
            <person name="Bouck J."/>
            <person name="Brokstein P."/>
            <person name="Brottier P."/>
            <person name="Burtis K.C."/>
            <person name="Busam D.A."/>
            <person name="Butler H."/>
            <person name="Cadieu E."/>
            <person name="Center A."/>
            <person name="Chandra I."/>
            <person name="Cherry J.M."/>
            <person name="Cawley S."/>
            <person name="Dahlke C."/>
            <person name="Davenport L.B."/>
            <person name="Davies P."/>
            <person name="de Pablos B."/>
            <person name="Delcher A."/>
            <person name="Deng Z."/>
            <person name="Mays A.D."/>
            <person name="Dew I."/>
            <person name="Dietz S.M."/>
            <person name="Dodson K."/>
            <person name="Doup L.E."/>
            <person name="Downes M."/>
            <person name="Dugan-Rocha S."/>
            <person name="Dunkov B.C."/>
            <person name="Dunn P."/>
            <person name="Durbin K.J."/>
            <person name="Evangelista C.C."/>
            <person name="Ferraz C."/>
            <person name="Ferriera S."/>
            <person name="Fleischmann W."/>
            <person name="Fosler C."/>
            <person name="Gabrielian A.E."/>
            <person name="Garg N.S."/>
            <person name="Gelbart W.M."/>
            <person name="Glasser K."/>
            <person name="Glodek A."/>
            <person name="Gong F."/>
            <person name="Gorrell J.H."/>
            <person name="Gu Z."/>
            <person name="Guan P."/>
            <person name="Harris M."/>
            <person name="Harris N.L."/>
            <person name="Harvey D.A."/>
            <person name="Heiman T.J."/>
            <person name="Hernandez J.R."/>
            <person name="Houck J."/>
            <person name="Hostin D."/>
            <person name="Houston K.A."/>
            <person name="Howland T.J."/>
            <person name="Wei M.-H."/>
            <person name="Ibegwam C."/>
            <person name="Jalali M."/>
            <person name="Kalush F."/>
            <person name="Karpen G.H."/>
            <person name="Ke Z."/>
            <person name="Kennison J.A."/>
            <person name="Ketchum K.A."/>
            <person name="Kimmel B.E."/>
            <person name="Kodira C.D."/>
            <person name="Kraft C.L."/>
            <person name="Kravitz S."/>
            <person name="Kulp D."/>
            <person name="Lai Z."/>
            <person name="Lasko P."/>
            <person name="Lei Y."/>
            <person name="Levitsky A.A."/>
            <person name="Li J.H."/>
            <person name="Li Z."/>
            <person name="Liang Y."/>
            <person name="Lin X."/>
            <person name="Liu X."/>
            <person name="Mattei B."/>
            <person name="McIntosh T.C."/>
            <person name="McLeod M.P."/>
            <person name="McPherson D."/>
            <person name="Merkulov G."/>
            <person name="Milshina N.V."/>
            <person name="Mobarry C."/>
            <person name="Morris J."/>
            <person name="Moshrefi A."/>
            <person name="Mount S.M."/>
            <person name="Moy M."/>
            <person name="Murphy B."/>
            <person name="Murphy L."/>
            <person name="Muzny D.M."/>
            <person name="Nelson D.L."/>
            <person name="Nelson D.R."/>
            <person name="Nelson K.A."/>
            <person name="Nixon K."/>
            <person name="Nusskern D.R."/>
            <person name="Pacleb J.M."/>
            <person name="Palazzolo M."/>
            <person name="Pittman G.S."/>
            <person name="Pan S."/>
            <person name="Pollard J."/>
            <person name="Puri V."/>
            <person name="Reese M.G."/>
            <person name="Reinert K."/>
            <person name="Remington K."/>
            <person name="Saunders R.D.C."/>
            <person name="Scheeler F."/>
            <person name="Shen H."/>
            <person name="Shue B.C."/>
            <person name="Siden-Kiamos I."/>
            <person name="Simpson M."/>
            <person name="Skupski M.P."/>
            <person name="Smith T.J."/>
            <person name="Spier E."/>
            <person name="Spradling A.C."/>
            <person name="Stapleton M."/>
            <person name="Strong R."/>
            <person name="Sun E."/>
            <person name="Svirskas R."/>
            <person name="Tector C."/>
            <person name="Turner R."/>
            <person name="Venter E."/>
            <person name="Wang A.H."/>
            <person name="Wang X."/>
            <person name="Wang Z.-Y."/>
            <person name="Wassarman D.A."/>
            <person name="Weinstock G.M."/>
            <person name="Weissenbach J."/>
            <person name="Williams S.M."/>
            <person name="Woodage T."/>
            <person name="Worley K.C."/>
            <person name="Wu D."/>
            <person name="Yang S."/>
            <person name="Yao Q.A."/>
            <person name="Ye J."/>
            <person name="Yeh R.-F."/>
            <person name="Zaveri J.S."/>
            <person name="Zhan M."/>
            <person name="Zhang G."/>
            <person name="Zhao Q."/>
            <person name="Zheng L."/>
            <person name="Zheng X.H."/>
            <person name="Zhong F.N."/>
            <person name="Zhong W."/>
            <person name="Zhou X."/>
            <person name="Zhu S.C."/>
            <person name="Zhu X."/>
            <person name="Smith H.O."/>
            <person name="Gibbs R.A."/>
            <person name="Myers E.W."/>
            <person name="Rubin G.M."/>
            <person name="Venter J.C."/>
        </authorList>
    </citation>
    <scope>NUCLEOTIDE SEQUENCE [LARGE SCALE GENOMIC DNA]</scope>
    <source>
        <strain>Berkeley</strain>
    </source>
</reference>
<reference key="3">
    <citation type="journal article" date="2002" name="Genome Biol.">
        <title>Annotation of the Drosophila melanogaster euchromatic genome: a systematic review.</title>
        <authorList>
            <person name="Misra S."/>
            <person name="Crosby M.A."/>
            <person name="Mungall C.J."/>
            <person name="Matthews B.B."/>
            <person name="Campbell K.S."/>
            <person name="Hradecky P."/>
            <person name="Huang Y."/>
            <person name="Kaminker J.S."/>
            <person name="Millburn G.H."/>
            <person name="Prochnik S.E."/>
            <person name="Smith C.D."/>
            <person name="Tupy J.L."/>
            <person name="Whitfield E.J."/>
            <person name="Bayraktaroglu L."/>
            <person name="Berman B.P."/>
            <person name="Bettencourt B.R."/>
            <person name="Celniker S.E."/>
            <person name="de Grey A.D.N.J."/>
            <person name="Drysdale R.A."/>
            <person name="Harris N.L."/>
            <person name="Richter J."/>
            <person name="Russo S."/>
            <person name="Schroeder A.J."/>
            <person name="Shu S.Q."/>
            <person name="Stapleton M."/>
            <person name="Yamada C."/>
            <person name="Ashburner M."/>
            <person name="Gelbart W.M."/>
            <person name="Rubin G.M."/>
            <person name="Lewis S.E."/>
        </authorList>
    </citation>
    <scope>GENOME REANNOTATION</scope>
    <source>
        <strain>Berkeley</strain>
    </source>
</reference>
<reference key="4">
    <citation type="journal article" date="2000" name="Science">
        <title>From sequence to chromosome: the tip of the X chromosome of D. melanogaster.</title>
        <authorList>
            <person name="Benos P.V."/>
            <person name="Gatt M.K."/>
            <person name="Ashburner M."/>
            <person name="Murphy L."/>
            <person name="Harris D."/>
            <person name="Barrell B.G."/>
            <person name="Ferraz C."/>
            <person name="Vidal S."/>
            <person name="Brun C."/>
            <person name="Demailles J."/>
            <person name="Cadieu E."/>
            <person name="Dreano S."/>
            <person name="Gloux S."/>
            <person name="Lelaure V."/>
            <person name="Mottier S."/>
            <person name="Galibert F."/>
            <person name="Borkova D."/>
            <person name="Minana B."/>
            <person name="Kafatos F.C."/>
            <person name="Louis C."/>
            <person name="Siden-Kiamos I."/>
            <person name="Bolshakov S."/>
            <person name="Papagiannakis G."/>
            <person name="Spanos L."/>
            <person name="Cox S."/>
            <person name="Madueno E."/>
            <person name="de Pablos B."/>
            <person name="Modolell J."/>
            <person name="Peter A."/>
            <person name="Schoettler P."/>
            <person name="Werner M."/>
            <person name="Mourkioti F."/>
            <person name="Beinert N."/>
            <person name="Dowe G."/>
            <person name="Schaefer U."/>
            <person name="Jaeckle H."/>
            <person name="Bucheton A."/>
            <person name="Callister D.M."/>
            <person name="Campbell L.A."/>
            <person name="Darlamitsou A."/>
            <person name="Henderson N.S."/>
            <person name="McMillan P.J."/>
            <person name="Salles C."/>
            <person name="Tait E.A."/>
            <person name="Valenti P."/>
            <person name="Saunders R.D.C."/>
            <person name="Glover D.M."/>
        </authorList>
    </citation>
    <scope>NUCLEOTIDE SEQUENCE [LARGE SCALE GENOMIC DNA]</scope>
    <source>
        <strain>Oregon-R</strain>
    </source>
</reference>
<reference key="5">
    <citation type="journal article" date="2002" name="Genome Biol.">
        <title>A Drosophila full-length cDNA resource.</title>
        <authorList>
            <person name="Stapleton M."/>
            <person name="Carlson J.W."/>
            <person name="Brokstein P."/>
            <person name="Yu C."/>
            <person name="Champe M."/>
            <person name="George R.A."/>
            <person name="Guarin H."/>
            <person name="Kronmiller B."/>
            <person name="Pacleb J.M."/>
            <person name="Park S."/>
            <person name="Wan K.H."/>
            <person name="Rubin G.M."/>
            <person name="Celniker S.E."/>
        </authorList>
    </citation>
    <scope>NUCLEOTIDE SEQUENCE [LARGE SCALE MRNA]</scope>
    <source>
        <strain>Berkeley</strain>
        <tissue>Embryo</tissue>
    </source>
</reference>
<reference key="6">
    <citation type="journal article" date="1988" name="EMBO J.">
        <title>The achaete-scute gene complex of Drosophila melanogaster comprises four homologous genes.</title>
        <authorList>
            <person name="Alonso M.C."/>
            <person name="Cabrera C.V."/>
        </authorList>
    </citation>
    <scope>NUCLEOTIDE SEQUENCE [GENOMIC DNA] OF 16-486</scope>
    <source>
        <strain>Canton-S</strain>
    </source>
</reference>
<sequence>MAALSFSPSPPPKENPKENPNPGIKTTLKPFGKITVHNVLSESGANALQQHIANQNTIIRKIRDFGMLGAVQSAAASTTNTTPISSQRKRPLGESQKQNRHNQQNQQLSKTSVPAKKCKTNKKLAVERPPKAGTISHPHKSQSDQSFGTPGRKGLPLPQAVARRNARERNRVKQVNNGFALLREKIPEEVSEAFEAQGAGRGASKKLSKVETLRMAVEYIRSLEKLLGFDFPPLNSQGNSSGSGDDSFMFIKDEFDCLDEHFDDSLSNYEMDEQQTVQQTLSEDMLNPPQASDLLPSLTTLNGLQYIRIPGTNTYQLLTTDLLGDLSHEQKLEETAASGQLSRSPVPQKVVRSPCSSPVSPVASTELLLQTQTCATPLQQQVIKQEYVSTNISSSSNAQTSPQQQQQVQNLGSSPILPAFYDQEPVSFYDNVVLPGFKKEFSDILQQDQPNNTTAGCLSDESMIDAIDWWEAHAPKSNGACTNLSV</sequence>